<proteinExistence type="inferred from homology"/>
<keyword id="KW-0217">Developmental protein</keyword>
<keyword id="KW-0238">DNA-binding</keyword>
<keyword id="KW-0371">Homeobox</keyword>
<keyword id="KW-0539">Nucleus</keyword>
<keyword id="KW-1185">Reference proteome</keyword>
<comment type="subcellular location">
    <subcellularLocation>
        <location evidence="1">Nucleus</location>
    </subcellularLocation>
</comment>
<comment type="similarity">
    <text evidence="2">Belongs to the Msh homeobox family.</text>
</comment>
<protein>
    <recommendedName>
        <fullName>Homeobox protein H17</fullName>
    </recommendedName>
</protein>
<feature type="chain" id="PRO_0000048989" description="Homeobox protein H17">
    <location>
        <begin position="1" status="less than"/>
        <end position="79" status="greater than"/>
    </location>
</feature>
<feature type="DNA-binding region" description="Homeobox" evidence="1">
    <location>
        <begin position="9"/>
        <end position="68"/>
    </location>
</feature>
<feature type="non-terminal residue">
    <location>
        <position position="1"/>
    </location>
</feature>
<feature type="non-terminal residue">
    <location>
        <position position="79"/>
    </location>
</feature>
<name>HM17_APIME</name>
<sequence length="79" mass="9482">CTLRKHKPNRKPRTPFTTQQLLSLEKKFREKQYLTIAERAEFSSSLHLTETQVKIWFQNRRAKAKRLQEAEIEKLRLSA</sequence>
<reference key="1">
    <citation type="journal article" date="1989" name="Proc. Natl. Acad. Sci. U.S.A.">
        <title>Comparison of homeobox-containing genes of the honeybee and Drosophila.</title>
        <authorList>
            <person name="Walldorf U."/>
            <person name="Fleig R."/>
            <person name="Gehring W.J."/>
        </authorList>
    </citation>
    <scope>NUCLEOTIDE SEQUENCE [GENOMIC DNA]</scope>
</reference>
<dbReference type="EMBL" id="M29491">
    <property type="protein sequence ID" value="AAA27726.1"/>
    <property type="molecule type" value="Genomic_DNA"/>
</dbReference>
<dbReference type="PIR" id="G34510">
    <property type="entry name" value="G34510"/>
</dbReference>
<dbReference type="SMR" id="P15857"/>
<dbReference type="PaxDb" id="7460-GB47493-PA"/>
<dbReference type="EnsemblMetazoa" id="NM_001115078">
    <property type="protein sequence ID" value="NP_001108550"/>
    <property type="gene ID" value="GeneID_724456"/>
</dbReference>
<dbReference type="eggNOG" id="KOG0492">
    <property type="taxonomic scope" value="Eukaryota"/>
</dbReference>
<dbReference type="InParanoid" id="P15857"/>
<dbReference type="PhylomeDB" id="P15857"/>
<dbReference type="Proteomes" id="UP000005203">
    <property type="component" value="Unplaced"/>
</dbReference>
<dbReference type="GO" id="GO:0005634">
    <property type="term" value="C:nucleus"/>
    <property type="evidence" value="ECO:0007669"/>
    <property type="project" value="UniProtKB-SubCell"/>
</dbReference>
<dbReference type="GO" id="GO:0000981">
    <property type="term" value="F:DNA-binding transcription factor activity, RNA polymerase II-specific"/>
    <property type="evidence" value="ECO:0007669"/>
    <property type="project" value="InterPro"/>
</dbReference>
<dbReference type="GO" id="GO:0000977">
    <property type="term" value="F:RNA polymerase II transcription regulatory region sequence-specific DNA binding"/>
    <property type="evidence" value="ECO:0007669"/>
    <property type="project" value="TreeGrafter"/>
</dbReference>
<dbReference type="GO" id="GO:0048598">
    <property type="term" value="P:embryonic morphogenesis"/>
    <property type="evidence" value="ECO:0007669"/>
    <property type="project" value="TreeGrafter"/>
</dbReference>
<dbReference type="CDD" id="cd00086">
    <property type="entry name" value="homeodomain"/>
    <property type="match status" value="1"/>
</dbReference>
<dbReference type="Gene3D" id="1.10.10.60">
    <property type="entry name" value="Homeodomain-like"/>
    <property type="match status" value="1"/>
</dbReference>
<dbReference type="InterPro" id="IPR001356">
    <property type="entry name" value="HD"/>
</dbReference>
<dbReference type="InterPro" id="IPR020479">
    <property type="entry name" value="HD_metazoa"/>
</dbReference>
<dbReference type="InterPro" id="IPR017970">
    <property type="entry name" value="Homeobox_CS"/>
</dbReference>
<dbReference type="InterPro" id="IPR009057">
    <property type="entry name" value="Homeodomain-like_sf"/>
</dbReference>
<dbReference type="InterPro" id="IPR050674">
    <property type="entry name" value="Msh_Homeobox_Regulators"/>
</dbReference>
<dbReference type="PANTHER" id="PTHR24338">
    <property type="entry name" value="HOMEOBOX PROTEIN MSX"/>
    <property type="match status" value="1"/>
</dbReference>
<dbReference type="PANTHER" id="PTHR24338:SF0">
    <property type="entry name" value="MUSCLE SEGMENTATION HOMEOBOX"/>
    <property type="match status" value="1"/>
</dbReference>
<dbReference type="Pfam" id="PF00046">
    <property type="entry name" value="Homeodomain"/>
    <property type="match status" value="1"/>
</dbReference>
<dbReference type="PRINTS" id="PR00024">
    <property type="entry name" value="HOMEOBOX"/>
</dbReference>
<dbReference type="SMART" id="SM00389">
    <property type="entry name" value="HOX"/>
    <property type="match status" value="1"/>
</dbReference>
<dbReference type="SUPFAM" id="SSF46689">
    <property type="entry name" value="Homeodomain-like"/>
    <property type="match status" value="1"/>
</dbReference>
<dbReference type="PROSITE" id="PS00027">
    <property type="entry name" value="HOMEOBOX_1"/>
    <property type="match status" value="1"/>
</dbReference>
<dbReference type="PROSITE" id="PS50071">
    <property type="entry name" value="HOMEOBOX_2"/>
    <property type="match status" value="1"/>
</dbReference>
<evidence type="ECO:0000255" key="1">
    <source>
        <dbReference type="PROSITE-ProRule" id="PRU00108"/>
    </source>
</evidence>
<evidence type="ECO:0000305" key="2"/>
<accession>P15857</accession>
<organism>
    <name type="scientific">Apis mellifera</name>
    <name type="common">Honeybee</name>
    <dbReference type="NCBI Taxonomy" id="7460"/>
    <lineage>
        <taxon>Eukaryota</taxon>
        <taxon>Metazoa</taxon>
        <taxon>Ecdysozoa</taxon>
        <taxon>Arthropoda</taxon>
        <taxon>Hexapoda</taxon>
        <taxon>Insecta</taxon>
        <taxon>Pterygota</taxon>
        <taxon>Neoptera</taxon>
        <taxon>Endopterygota</taxon>
        <taxon>Hymenoptera</taxon>
        <taxon>Apocrita</taxon>
        <taxon>Aculeata</taxon>
        <taxon>Apoidea</taxon>
        <taxon>Anthophila</taxon>
        <taxon>Apidae</taxon>
        <taxon>Apis</taxon>
    </lineage>
</organism>